<evidence type="ECO:0000255" key="1">
    <source>
        <dbReference type="HAMAP-Rule" id="MF_00294"/>
    </source>
</evidence>
<gene>
    <name evidence="1" type="primary">rpmG1</name>
    <name type="ordered locus">LSEI_1847</name>
</gene>
<name>RL331_LACP3</name>
<proteinExistence type="inferred from homology"/>
<protein>
    <recommendedName>
        <fullName evidence="1">Large ribosomal subunit protein bL33A</fullName>
    </recommendedName>
    <alternativeName>
        <fullName evidence="1">50S ribosomal protein L33 1</fullName>
    </alternativeName>
</protein>
<comment type="similarity">
    <text evidence="1">Belongs to the bacterial ribosomal protein bL33 family.</text>
</comment>
<dbReference type="EMBL" id="CP000423">
    <property type="protein sequence ID" value="ABJ70606.1"/>
    <property type="molecule type" value="Genomic_DNA"/>
</dbReference>
<dbReference type="RefSeq" id="YP_807048.1">
    <property type="nucleotide sequence ID" value="NC_008526.1"/>
</dbReference>
<dbReference type="SMR" id="Q037L6"/>
<dbReference type="STRING" id="321967.LSEI_1847"/>
<dbReference type="PaxDb" id="321967-LSEI_1847"/>
<dbReference type="KEGG" id="lca:LSEI_1847"/>
<dbReference type="PATRIC" id="fig|321967.11.peg.1821"/>
<dbReference type="HOGENOM" id="CLU_190949_3_2_9"/>
<dbReference type="PRO" id="PR:Q037L6"/>
<dbReference type="Proteomes" id="UP000001651">
    <property type="component" value="Chromosome"/>
</dbReference>
<dbReference type="GO" id="GO:0005737">
    <property type="term" value="C:cytoplasm"/>
    <property type="evidence" value="ECO:0007669"/>
    <property type="project" value="UniProtKB-ARBA"/>
</dbReference>
<dbReference type="GO" id="GO:1990904">
    <property type="term" value="C:ribonucleoprotein complex"/>
    <property type="evidence" value="ECO:0007669"/>
    <property type="project" value="UniProtKB-KW"/>
</dbReference>
<dbReference type="GO" id="GO:0005840">
    <property type="term" value="C:ribosome"/>
    <property type="evidence" value="ECO:0007669"/>
    <property type="project" value="UniProtKB-KW"/>
</dbReference>
<dbReference type="GO" id="GO:0003735">
    <property type="term" value="F:structural constituent of ribosome"/>
    <property type="evidence" value="ECO:0007669"/>
    <property type="project" value="InterPro"/>
</dbReference>
<dbReference type="GO" id="GO:0006412">
    <property type="term" value="P:translation"/>
    <property type="evidence" value="ECO:0007669"/>
    <property type="project" value="UniProtKB-UniRule"/>
</dbReference>
<dbReference type="Gene3D" id="2.20.28.120">
    <property type="entry name" value="Ribosomal protein L33"/>
    <property type="match status" value="1"/>
</dbReference>
<dbReference type="HAMAP" id="MF_00294">
    <property type="entry name" value="Ribosomal_bL33"/>
    <property type="match status" value="1"/>
</dbReference>
<dbReference type="InterPro" id="IPR001705">
    <property type="entry name" value="Ribosomal_bL33"/>
</dbReference>
<dbReference type="InterPro" id="IPR018264">
    <property type="entry name" value="Ribosomal_bL33_CS"/>
</dbReference>
<dbReference type="InterPro" id="IPR038584">
    <property type="entry name" value="Ribosomal_bL33_sf"/>
</dbReference>
<dbReference type="InterPro" id="IPR011332">
    <property type="entry name" value="Ribosomal_zn-bd"/>
</dbReference>
<dbReference type="NCBIfam" id="NF001764">
    <property type="entry name" value="PRK00504.1"/>
    <property type="match status" value="1"/>
</dbReference>
<dbReference type="NCBIfam" id="NF001860">
    <property type="entry name" value="PRK00595.1"/>
    <property type="match status" value="1"/>
</dbReference>
<dbReference type="NCBIfam" id="TIGR01023">
    <property type="entry name" value="rpmG_bact"/>
    <property type="match status" value="1"/>
</dbReference>
<dbReference type="PANTHER" id="PTHR43168">
    <property type="entry name" value="50S RIBOSOMAL PROTEIN L33, CHLOROPLASTIC"/>
    <property type="match status" value="1"/>
</dbReference>
<dbReference type="PANTHER" id="PTHR43168:SF2">
    <property type="entry name" value="LARGE RIBOSOMAL SUBUNIT PROTEIN BL33C"/>
    <property type="match status" value="1"/>
</dbReference>
<dbReference type="Pfam" id="PF00471">
    <property type="entry name" value="Ribosomal_L33"/>
    <property type="match status" value="1"/>
</dbReference>
<dbReference type="SUPFAM" id="SSF57829">
    <property type="entry name" value="Zn-binding ribosomal proteins"/>
    <property type="match status" value="1"/>
</dbReference>
<dbReference type="PROSITE" id="PS00582">
    <property type="entry name" value="RIBOSOMAL_L33"/>
    <property type="match status" value="1"/>
</dbReference>
<organism>
    <name type="scientific">Lacticaseibacillus paracasei (strain ATCC 334 / BCRC 17002 / CCUG 31169 / CIP 107868 / KCTC 3260 / NRRL B-441)</name>
    <name type="common">Lactobacillus paracasei</name>
    <dbReference type="NCBI Taxonomy" id="321967"/>
    <lineage>
        <taxon>Bacteria</taxon>
        <taxon>Bacillati</taxon>
        <taxon>Bacillota</taxon>
        <taxon>Bacilli</taxon>
        <taxon>Lactobacillales</taxon>
        <taxon>Lactobacillaceae</taxon>
        <taxon>Lacticaseibacillus</taxon>
    </lineage>
</organism>
<sequence>MRNNIILGNNETGERIYLTSKNKRNTPDRLQLKKYSPKLRKRVVFTEVK</sequence>
<keyword id="KW-1185">Reference proteome</keyword>
<keyword id="KW-0687">Ribonucleoprotein</keyword>
<keyword id="KW-0689">Ribosomal protein</keyword>
<feature type="chain" id="PRO_0000356495" description="Large ribosomal subunit protein bL33A">
    <location>
        <begin position="1"/>
        <end position="49"/>
    </location>
</feature>
<accession>Q037L6</accession>
<reference key="1">
    <citation type="journal article" date="2006" name="Proc. Natl. Acad. Sci. U.S.A.">
        <title>Comparative genomics of the lactic acid bacteria.</title>
        <authorList>
            <person name="Makarova K.S."/>
            <person name="Slesarev A."/>
            <person name="Wolf Y.I."/>
            <person name="Sorokin A."/>
            <person name="Mirkin B."/>
            <person name="Koonin E.V."/>
            <person name="Pavlov A."/>
            <person name="Pavlova N."/>
            <person name="Karamychev V."/>
            <person name="Polouchine N."/>
            <person name="Shakhova V."/>
            <person name="Grigoriev I."/>
            <person name="Lou Y."/>
            <person name="Rohksar D."/>
            <person name="Lucas S."/>
            <person name="Huang K."/>
            <person name="Goodstein D.M."/>
            <person name="Hawkins T."/>
            <person name="Plengvidhya V."/>
            <person name="Welker D."/>
            <person name="Hughes J."/>
            <person name="Goh Y."/>
            <person name="Benson A."/>
            <person name="Baldwin K."/>
            <person name="Lee J.-H."/>
            <person name="Diaz-Muniz I."/>
            <person name="Dosti B."/>
            <person name="Smeianov V."/>
            <person name="Wechter W."/>
            <person name="Barabote R."/>
            <person name="Lorca G."/>
            <person name="Altermann E."/>
            <person name="Barrangou R."/>
            <person name="Ganesan B."/>
            <person name="Xie Y."/>
            <person name="Rawsthorne H."/>
            <person name="Tamir D."/>
            <person name="Parker C."/>
            <person name="Breidt F."/>
            <person name="Broadbent J.R."/>
            <person name="Hutkins R."/>
            <person name="O'Sullivan D."/>
            <person name="Steele J."/>
            <person name="Unlu G."/>
            <person name="Saier M.H. Jr."/>
            <person name="Klaenhammer T."/>
            <person name="Richardson P."/>
            <person name="Kozyavkin S."/>
            <person name="Weimer B.C."/>
            <person name="Mills D.A."/>
        </authorList>
    </citation>
    <scope>NUCLEOTIDE SEQUENCE [LARGE SCALE GENOMIC DNA]</scope>
    <source>
        <strain>ATCC 334 / BCRC 17002 / CCUG 31169 / CIP 107868 / KCTC 3260 / NRRL B-441</strain>
    </source>
</reference>